<sequence length="226" mass="25380">MENPAFKRAIRSFVLRQGHLSAGQQRAMDEGMPKWGIEYRPETMDLEQVFGRAAPKILEIGFGMGGATAEIAAANPDNDYLGIEVHGPGVGNLCKLIAEKELTNLRLMRHDAVEVLDNMLADGSLDGVHIFFPDPWHKKRHNKRRLIQAPLVEKLAKKLKPGGYFHAATDWEDYAIQILEVLNGNADLENTADGYAPRPDYRPLTKFEARGIKLGHGVWDVIFRRK</sequence>
<reference key="1">
    <citation type="journal article" date="2003" name="Proc. Natl. Acad. Sci. U.S.A.">
        <title>The complete genome sequence of Chromobacterium violaceum reveals remarkable and exploitable bacterial adaptability.</title>
        <authorList>
            <person name="Vasconcelos A.T.R."/>
            <person name="de Almeida D.F."/>
            <person name="Hungria M."/>
            <person name="Guimaraes C.T."/>
            <person name="Antonio R.V."/>
            <person name="Almeida F.C."/>
            <person name="de Almeida L.G.P."/>
            <person name="de Almeida R."/>
            <person name="Alves-Gomes J.A."/>
            <person name="Andrade E.M."/>
            <person name="Araripe J."/>
            <person name="de Araujo M.F.F."/>
            <person name="Astolfi-Filho S."/>
            <person name="Azevedo V."/>
            <person name="Baptista A.J."/>
            <person name="Bataus L.A.M."/>
            <person name="Batista J.S."/>
            <person name="Belo A."/>
            <person name="van den Berg C."/>
            <person name="Bogo M."/>
            <person name="Bonatto S."/>
            <person name="Bordignon J."/>
            <person name="Brigido M.M."/>
            <person name="Brito C.A."/>
            <person name="Brocchi M."/>
            <person name="Burity H.A."/>
            <person name="Camargo A.A."/>
            <person name="Cardoso D.D.P."/>
            <person name="Carneiro N.P."/>
            <person name="Carraro D.M."/>
            <person name="Carvalho C.M.B."/>
            <person name="Cascardo J.C.M."/>
            <person name="Cavada B.S."/>
            <person name="Chueire L.M.O."/>
            <person name="Creczynski-Pasa T.B."/>
            <person name="Cunha-Junior N.C."/>
            <person name="Fagundes N."/>
            <person name="Falcao C.L."/>
            <person name="Fantinatti F."/>
            <person name="Farias I.P."/>
            <person name="Felipe M.S.S."/>
            <person name="Ferrari L.P."/>
            <person name="Ferro J.A."/>
            <person name="Ferro M.I.T."/>
            <person name="Franco G.R."/>
            <person name="Freitas N.S.A."/>
            <person name="Furlan L.R."/>
            <person name="Gazzinelli R.T."/>
            <person name="Gomes E.A."/>
            <person name="Goncalves P.R."/>
            <person name="Grangeiro T.B."/>
            <person name="Grattapaglia D."/>
            <person name="Grisard E.C."/>
            <person name="Hanna E.S."/>
            <person name="Jardim S.N."/>
            <person name="Laurino J."/>
            <person name="Leoi L.C.T."/>
            <person name="Lima L.F.A."/>
            <person name="Loureiro M.F."/>
            <person name="Lyra M.C.C.P."/>
            <person name="Madeira H.M.F."/>
            <person name="Manfio G.P."/>
            <person name="Maranhao A.Q."/>
            <person name="Martins W.S."/>
            <person name="di Mauro S.M.Z."/>
            <person name="de Medeiros S.R.B."/>
            <person name="Meissner R.V."/>
            <person name="Moreira M.A.M."/>
            <person name="Nascimento F.F."/>
            <person name="Nicolas M.F."/>
            <person name="Oliveira J.G."/>
            <person name="Oliveira S.C."/>
            <person name="Paixao R.F.C."/>
            <person name="Parente J.A."/>
            <person name="Pedrosa F.O."/>
            <person name="Pena S.D.J."/>
            <person name="Pereira J.O."/>
            <person name="Pereira M."/>
            <person name="Pinto L.S.R.C."/>
            <person name="Pinto L.S."/>
            <person name="Porto J.I.R."/>
            <person name="Potrich D.P."/>
            <person name="Ramalho-Neto C.E."/>
            <person name="Reis A.M.M."/>
            <person name="Rigo L.U."/>
            <person name="Rondinelli E."/>
            <person name="Santos E.B.P."/>
            <person name="Santos F.R."/>
            <person name="Schneider M.P.C."/>
            <person name="Seuanez H.N."/>
            <person name="Silva A.M.R."/>
            <person name="da Silva A.L.C."/>
            <person name="Silva D.W."/>
            <person name="Silva R."/>
            <person name="Simoes I.C."/>
            <person name="Simon D."/>
            <person name="Soares C.M.A."/>
            <person name="Soares R.B.A."/>
            <person name="Souza E.M."/>
            <person name="Souza K.R.L."/>
            <person name="Souza R.C."/>
            <person name="Steffens M.B.R."/>
            <person name="Steindel M."/>
            <person name="Teixeira S.R."/>
            <person name="Urmenyi T."/>
            <person name="Vettore A."/>
            <person name="Wassem R."/>
            <person name="Zaha A."/>
            <person name="Simpson A.J.G."/>
        </authorList>
    </citation>
    <scope>NUCLEOTIDE SEQUENCE [LARGE SCALE GENOMIC DNA]</scope>
    <source>
        <strain>ATCC 12472 / DSM 30191 / JCM 1249 / CCUG 213 / NBRC 12614 / NCIMB 9131 / NCTC 9757 / MK</strain>
    </source>
</reference>
<keyword id="KW-0489">Methyltransferase</keyword>
<keyword id="KW-1185">Reference proteome</keyword>
<keyword id="KW-0949">S-adenosyl-L-methionine</keyword>
<keyword id="KW-0808">Transferase</keyword>
<keyword id="KW-0819">tRNA processing</keyword>
<proteinExistence type="inferred from homology"/>
<accession>Q7NRJ5</accession>
<gene>
    <name evidence="2" type="primary">trmB</name>
    <name type="ordered locus">CV_3786</name>
</gene>
<dbReference type="EC" id="2.1.1.33" evidence="2"/>
<dbReference type="EMBL" id="AE016825">
    <property type="protein sequence ID" value="AAQ61448.1"/>
    <property type="molecule type" value="Genomic_DNA"/>
</dbReference>
<dbReference type="RefSeq" id="WP_011137333.1">
    <property type="nucleotide sequence ID" value="NC_005085.1"/>
</dbReference>
<dbReference type="SMR" id="Q7NRJ5"/>
<dbReference type="STRING" id="243365.CV_3786"/>
<dbReference type="GeneID" id="66365019"/>
<dbReference type="KEGG" id="cvi:CV_3786"/>
<dbReference type="eggNOG" id="COG0220">
    <property type="taxonomic scope" value="Bacteria"/>
</dbReference>
<dbReference type="HOGENOM" id="CLU_050910_0_1_4"/>
<dbReference type="OrthoDB" id="9802090at2"/>
<dbReference type="UniPathway" id="UPA00989"/>
<dbReference type="Proteomes" id="UP000001424">
    <property type="component" value="Chromosome"/>
</dbReference>
<dbReference type="GO" id="GO:0043527">
    <property type="term" value="C:tRNA methyltransferase complex"/>
    <property type="evidence" value="ECO:0007669"/>
    <property type="project" value="TreeGrafter"/>
</dbReference>
<dbReference type="GO" id="GO:0008176">
    <property type="term" value="F:tRNA (guanine(46)-N7)-methyltransferase activity"/>
    <property type="evidence" value="ECO:0007669"/>
    <property type="project" value="UniProtKB-UniRule"/>
</dbReference>
<dbReference type="CDD" id="cd02440">
    <property type="entry name" value="AdoMet_MTases"/>
    <property type="match status" value="1"/>
</dbReference>
<dbReference type="FunFam" id="3.40.50.150:FF:000035">
    <property type="entry name" value="tRNA (guanine-N(7)-)-methyltransferase"/>
    <property type="match status" value="1"/>
</dbReference>
<dbReference type="Gene3D" id="3.40.50.150">
    <property type="entry name" value="Vaccinia Virus protein VP39"/>
    <property type="match status" value="1"/>
</dbReference>
<dbReference type="HAMAP" id="MF_01057">
    <property type="entry name" value="tRNA_methyltr_TrmB"/>
    <property type="match status" value="1"/>
</dbReference>
<dbReference type="InterPro" id="IPR029063">
    <property type="entry name" value="SAM-dependent_MTases_sf"/>
</dbReference>
<dbReference type="InterPro" id="IPR003358">
    <property type="entry name" value="tRNA_(Gua-N-7)_MeTrfase_Trmb"/>
</dbReference>
<dbReference type="InterPro" id="IPR055361">
    <property type="entry name" value="tRNA_methyltr_TrmB_bact"/>
</dbReference>
<dbReference type="NCBIfam" id="TIGR00091">
    <property type="entry name" value="tRNA (guanosine(46)-N7)-methyltransferase TrmB"/>
    <property type="match status" value="1"/>
</dbReference>
<dbReference type="PANTHER" id="PTHR23417">
    <property type="entry name" value="3-DEOXY-D-MANNO-OCTULOSONIC-ACID TRANSFERASE/TRNA GUANINE-N 7 - -METHYLTRANSFERASE"/>
    <property type="match status" value="1"/>
</dbReference>
<dbReference type="PANTHER" id="PTHR23417:SF14">
    <property type="entry name" value="PENTACOTRIPEPTIDE-REPEAT REGION OF PRORP DOMAIN-CONTAINING PROTEIN"/>
    <property type="match status" value="1"/>
</dbReference>
<dbReference type="Pfam" id="PF02390">
    <property type="entry name" value="Methyltransf_4"/>
    <property type="match status" value="1"/>
</dbReference>
<dbReference type="SUPFAM" id="SSF53335">
    <property type="entry name" value="S-adenosyl-L-methionine-dependent methyltransferases"/>
    <property type="match status" value="1"/>
</dbReference>
<dbReference type="PROSITE" id="PS51625">
    <property type="entry name" value="SAM_MT_TRMB"/>
    <property type="match status" value="1"/>
</dbReference>
<organism>
    <name type="scientific">Chromobacterium violaceum (strain ATCC 12472 / DSM 30191 / JCM 1249 / CCUG 213 / NBRC 12614 / NCIMB 9131 / NCTC 9757 / MK)</name>
    <dbReference type="NCBI Taxonomy" id="243365"/>
    <lineage>
        <taxon>Bacteria</taxon>
        <taxon>Pseudomonadati</taxon>
        <taxon>Pseudomonadota</taxon>
        <taxon>Betaproteobacteria</taxon>
        <taxon>Neisseriales</taxon>
        <taxon>Chromobacteriaceae</taxon>
        <taxon>Chromobacterium</taxon>
    </lineage>
</organism>
<protein>
    <recommendedName>
        <fullName evidence="2">tRNA (guanine-N(7)-)-methyltransferase</fullName>
        <ecNumber evidence="2">2.1.1.33</ecNumber>
    </recommendedName>
    <alternativeName>
        <fullName evidence="2">tRNA (guanine(46)-N(7))-methyltransferase</fullName>
    </alternativeName>
    <alternativeName>
        <fullName evidence="2">tRNA(m7G46)-methyltransferase</fullName>
    </alternativeName>
</protein>
<feature type="chain" id="PRO_0000171318" description="tRNA (guanine-N(7)-)-methyltransferase">
    <location>
        <begin position="1"/>
        <end position="226"/>
    </location>
</feature>
<feature type="region of interest" description="Interaction with RNA" evidence="2">
    <location>
        <begin position="140"/>
        <end position="145"/>
    </location>
</feature>
<feature type="active site" evidence="1">
    <location>
        <position position="134"/>
    </location>
</feature>
<feature type="binding site" evidence="2">
    <location>
        <position position="59"/>
    </location>
    <ligand>
        <name>S-adenosyl-L-methionine</name>
        <dbReference type="ChEBI" id="CHEBI:59789"/>
    </ligand>
</feature>
<feature type="binding site" evidence="2">
    <location>
        <position position="84"/>
    </location>
    <ligand>
        <name>S-adenosyl-L-methionine</name>
        <dbReference type="ChEBI" id="CHEBI:59789"/>
    </ligand>
</feature>
<feature type="binding site" evidence="2">
    <location>
        <position position="111"/>
    </location>
    <ligand>
        <name>S-adenosyl-L-methionine</name>
        <dbReference type="ChEBI" id="CHEBI:59789"/>
    </ligand>
</feature>
<feature type="binding site" evidence="2">
    <location>
        <position position="134"/>
    </location>
    <ligand>
        <name>S-adenosyl-L-methionine</name>
        <dbReference type="ChEBI" id="CHEBI:59789"/>
    </ligand>
</feature>
<feature type="binding site" evidence="2">
    <location>
        <position position="138"/>
    </location>
    <ligand>
        <name>substrate</name>
    </ligand>
</feature>
<feature type="binding site" evidence="2">
    <location>
        <position position="170"/>
    </location>
    <ligand>
        <name>substrate</name>
    </ligand>
</feature>
<feature type="binding site" evidence="2">
    <location>
        <begin position="205"/>
        <end position="208"/>
    </location>
    <ligand>
        <name>substrate</name>
    </ligand>
</feature>
<name>TRMB_CHRVO</name>
<evidence type="ECO:0000250" key="1"/>
<evidence type="ECO:0000255" key="2">
    <source>
        <dbReference type="HAMAP-Rule" id="MF_01057"/>
    </source>
</evidence>
<comment type="function">
    <text evidence="2">Catalyzes the formation of N(7)-methylguanine at position 46 (m7G46) in tRNA.</text>
</comment>
<comment type="catalytic activity">
    <reaction evidence="2">
        <text>guanosine(46) in tRNA + S-adenosyl-L-methionine = N(7)-methylguanosine(46) in tRNA + S-adenosyl-L-homocysteine</text>
        <dbReference type="Rhea" id="RHEA:42708"/>
        <dbReference type="Rhea" id="RHEA-COMP:10188"/>
        <dbReference type="Rhea" id="RHEA-COMP:10189"/>
        <dbReference type="ChEBI" id="CHEBI:57856"/>
        <dbReference type="ChEBI" id="CHEBI:59789"/>
        <dbReference type="ChEBI" id="CHEBI:74269"/>
        <dbReference type="ChEBI" id="CHEBI:74480"/>
        <dbReference type="EC" id="2.1.1.33"/>
    </reaction>
</comment>
<comment type="pathway">
    <text evidence="2">tRNA modification; N(7)-methylguanine-tRNA biosynthesis.</text>
</comment>
<comment type="similarity">
    <text evidence="2">Belongs to the class I-like SAM-binding methyltransferase superfamily. TrmB family.</text>
</comment>